<name>MCRB_METFE</name>
<feature type="chain" id="PRO_0000147463" description="Methyl-coenzyme M reductase subunit beta">
    <location>
        <begin position="1"/>
        <end position="438"/>
    </location>
</feature>
<feature type="binding site" evidence="1">
    <location>
        <position position="367"/>
    </location>
    <ligand>
        <name>coenzyme M</name>
        <dbReference type="ChEBI" id="CHEBI:58319"/>
    </ligand>
</feature>
<feature type="binding site" evidence="1">
    <location>
        <position position="369"/>
    </location>
    <ligand>
        <name>coenzyme B</name>
        <dbReference type="ChEBI" id="CHEBI:58596"/>
    </ligand>
</feature>
<dbReference type="EC" id="2.8.4.1" evidence="1"/>
<dbReference type="EMBL" id="J03375">
    <property type="protein sequence ID" value="AAA72193.1"/>
    <property type="molecule type" value="Genomic_DNA"/>
</dbReference>
<dbReference type="SMR" id="P12972"/>
<dbReference type="UniPathway" id="UPA00646">
    <property type="reaction ID" value="UER00699"/>
</dbReference>
<dbReference type="GO" id="GO:0005737">
    <property type="term" value="C:cytoplasm"/>
    <property type="evidence" value="ECO:0007669"/>
    <property type="project" value="UniProtKB-SubCell"/>
</dbReference>
<dbReference type="GO" id="GO:0050524">
    <property type="term" value="F:coenzyme-B sulfoethylthiotransferase activity"/>
    <property type="evidence" value="ECO:0007669"/>
    <property type="project" value="UniProtKB-EC"/>
</dbReference>
<dbReference type="GO" id="GO:0015948">
    <property type="term" value="P:methanogenesis"/>
    <property type="evidence" value="ECO:0007669"/>
    <property type="project" value="UniProtKB-KW"/>
</dbReference>
<dbReference type="Gene3D" id="3.30.70.470">
    <property type="match status" value="1"/>
</dbReference>
<dbReference type="Gene3D" id="1.20.840.10">
    <property type="entry name" value="Methyl-coenzyme M reductase, alpha/beta subunit, C-terminal"/>
    <property type="match status" value="1"/>
</dbReference>
<dbReference type="InterPro" id="IPR008924">
    <property type="entry name" value="Me_CoM_Rdtase_asu/bsu_C"/>
</dbReference>
<dbReference type="InterPro" id="IPR015823">
    <property type="entry name" value="Me_CoM_Rdtase_asu_N_sub2"/>
</dbReference>
<dbReference type="InterPro" id="IPR003179">
    <property type="entry name" value="Me_CoM_Rdtase_bsu"/>
</dbReference>
<dbReference type="InterPro" id="IPR022679">
    <property type="entry name" value="Me_CoM_Rdtase_bsu_C"/>
</dbReference>
<dbReference type="InterPro" id="IPR022680">
    <property type="entry name" value="Me_CoM_Rdtase_bsu_N"/>
</dbReference>
<dbReference type="InterPro" id="IPR009024">
    <property type="entry name" value="Me_CoM_Rdtase_Fd-like_fold"/>
</dbReference>
<dbReference type="NCBIfam" id="TIGR03257">
    <property type="entry name" value="met_CoM_red_bet"/>
    <property type="match status" value="1"/>
</dbReference>
<dbReference type="Pfam" id="PF02241">
    <property type="entry name" value="MCR_beta"/>
    <property type="match status" value="1"/>
</dbReference>
<dbReference type="Pfam" id="PF02783">
    <property type="entry name" value="MCR_beta_N"/>
    <property type="match status" value="1"/>
</dbReference>
<dbReference type="PIRSF" id="PIRSF000263">
    <property type="entry name" value="Meth_CoM_rd_beta"/>
    <property type="match status" value="1"/>
</dbReference>
<dbReference type="SUPFAM" id="SSF48081">
    <property type="entry name" value="Methyl-coenzyme M reductase alpha and beta chain C-terminal domain"/>
    <property type="match status" value="1"/>
</dbReference>
<dbReference type="SUPFAM" id="SSF55088">
    <property type="entry name" value="Methyl-coenzyme M reductase subunits"/>
    <property type="match status" value="1"/>
</dbReference>
<reference key="1">
    <citation type="journal article" date="1988" name="J. Bacteriol.">
        <title>Structure and comparative analysis of the genes encoding component C of methyl coenzyme M reductase in the extremely thermophilic archaebacterium Methanothermus fervidus.</title>
        <authorList>
            <person name="Weil C.F."/>
            <person name="Cram D.S."/>
            <person name="Sherf B.A."/>
            <person name="Reeve J.N."/>
        </authorList>
    </citation>
    <scope>NUCLEOTIDE SEQUENCE [GENOMIC DNA]</scope>
</reference>
<keyword id="KW-0963">Cytoplasm</keyword>
<keyword id="KW-0484">Methanogenesis</keyword>
<keyword id="KW-0808">Transferase</keyword>
<proteinExistence type="inferred from homology"/>
<comment type="function">
    <text evidence="1">Component of the methyl-coenzyme M reductase (MCR) I that catalyzes the reductive cleavage of methyl-coenzyme M (CoM-S-CH3 or 2-(methylthio)ethanesulfonate) using coenzyme B (CoB or 7-mercaptoheptanoylthreonine phosphate) as reductant which results in the production of methane and the mixed heterodisulfide of CoB and CoM (CoM-S-S-CoB). This is the final step in methanogenesis.</text>
</comment>
<comment type="catalytic activity">
    <reaction evidence="1">
        <text>coenzyme B + methyl-coenzyme M = methane + coenzyme M-coenzyme B heterodisulfide</text>
        <dbReference type="Rhea" id="RHEA:12532"/>
        <dbReference type="ChEBI" id="CHEBI:16183"/>
        <dbReference type="ChEBI" id="CHEBI:58286"/>
        <dbReference type="ChEBI" id="CHEBI:58411"/>
        <dbReference type="ChEBI" id="CHEBI:58596"/>
        <dbReference type="EC" id="2.8.4.1"/>
    </reaction>
    <physiologicalReaction direction="left-to-right" evidence="1">
        <dbReference type="Rhea" id="RHEA:12533"/>
    </physiologicalReaction>
</comment>
<comment type="cofactor">
    <cofactor evidence="1">
        <name>coenzyme F430</name>
        <dbReference type="ChEBI" id="CHEBI:60540"/>
    </cofactor>
    <text evidence="1">Binds 2 coenzyme F430 non-covalently per MCR complex. Coenzyme F430 is a yellow nickel porphinoid. Methyl-coenzyme-M reductase is activated when the enzyme-bound coenzyme F430 is reduced to the Ni(I) oxidation state.</text>
</comment>
<comment type="pathway">
    <text evidence="1">One-carbon metabolism; methyl-coenzyme M reduction; methane from methyl-coenzyme M: step 1/1.</text>
</comment>
<comment type="subunit">
    <text evidence="1">MCR is a hexamer of two alpha, two beta, and two gamma chains, forming a dimer of heterotrimers.</text>
</comment>
<comment type="subcellular location">
    <subcellularLocation>
        <location evidence="1">Cytoplasm</location>
    </subcellularLocation>
</comment>
<comment type="similarity">
    <text evidence="2">Belongs to the methyl-coenzyme M reductase beta subunit family.</text>
</comment>
<gene>
    <name type="primary">mcrB</name>
</gene>
<protein>
    <recommendedName>
        <fullName>Methyl-coenzyme M reductase subunit beta</fullName>
        <ecNumber evidence="1">2.8.4.1</ecNumber>
    </recommendedName>
    <alternativeName>
        <fullName>Coenzyme-B sulfoethylthiotransferase beta</fullName>
    </alternativeName>
</protein>
<evidence type="ECO:0000250" key="1">
    <source>
        <dbReference type="UniProtKB" id="P11560"/>
    </source>
</evidence>
<evidence type="ECO:0000305" key="2"/>
<accession>P12972</accession>
<sequence length="438" mass="47034">MPKYEDKVDLYDDRGNLVEEQVPIEALSPLRNTAIKKIIHDIKRTVAVNLEGIENALRSAKVGGSGCHIPGRELDVDVIDNAEAIAEKAKEMIQVEEGDDTVVELLHDGKRALVKVPSSRLESAAEYSVAPLVTASAFIQSIIDVCDISIYDANMVKAAVLGRYPQSVEYVGGNIATMLDIPQKLEGPGYALRNILVNHIVAATLKNTLQAVALSSILEHTAMFEMGDAVGKFERLHLLGLAYQGLNADNLLYDLVKANGKDGTVGSVVEDVVERAKEDGVIKVEKELNGYKVYGTDDLALWNAYAAAGLVAATIVNQGAARAAQGVSSTILYDNDIIEFERGLPGVDFGRAEGTAVGFSFFSHSIYGGGGPGIFNGNHIVTRHSKGFAIPCVAAAMALDAGTQMFSPELTSGLIKDVFSKVDEFREPLKYVVELQPK</sequence>
<organism>
    <name type="scientific">Methanothermus fervidus</name>
    <dbReference type="NCBI Taxonomy" id="2180"/>
    <lineage>
        <taxon>Archaea</taxon>
        <taxon>Methanobacteriati</taxon>
        <taxon>Methanobacteriota</taxon>
        <taxon>Methanomada group</taxon>
        <taxon>Methanobacteria</taxon>
        <taxon>Methanobacteriales</taxon>
        <taxon>Methanothermaceae</taxon>
        <taxon>Methanothermus</taxon>
    </lineage>
</organism>